<comment type="function">
    <text evidence="4">Cytochrome P450 monooxygenase; part of the gene cluster that mediates the biosynthesis of brefeldin A (BFA), a protein transport inhibitor that shows antiviral, antifungal, and antitumor properties (PubMed:24845309). The proposed biosynthesis of BFA involves formation of an acyclic polyketide chain that is differentially tailored throughout the backbone (PubMed:24845309). The highly reducing polyketide synthase Bref-PKS is proposed to synthesize the precisely reduced octaketide precursor, which could then be directly offloaded by the thiohydrolase enzyme Bref-TH followed by a cytochrome P450 monooxygenase-mediated formation of the cyclopentane ring and macrocyclization to afford 7-deoxy BFA. Alternatively, the first ring annulation can also occur on the ACP-tethered intermediate before the thiohydrolase release and lactonization (PubMed:24845309). The C7-hydroxylation by another cytochrome P450 monooxygenase is believed to be the final step in the process to obtain the final structure of BFA (PubMed:24845309). In addition to the HRPKS Bref-PKS and the thiohydrolase Bref-TH, the brefeldin A biosynthesis cluster contains 4 cytochrome p450 monooxygenases (called orf3 to orf6), as well a the probable cluster-specific transcription regulator orf8 (PubMed:24845309).</text>
</comment>
<comment type="cofactor">
    <cofactor evidence="1">
        <name>heme</name>
        <dbReference type="ChEBI" id="CHEBI:30413"/>
    </cofactor>
</comment>
<comment type="pathway">
    <text evidence="7">Mycotoxin biosynthesis.</text>
</comment>
<comment type="subcellular location">
    <subcellularLocation>
        <location evidence="2">Membrane</location>
        <topology evidence="2">Single-pass membrane protein</topology>
    </subcellularLocation>
</comment>
<comment type="induction">
    <text evidence="4">Coexpressed with the other cluster genes on brefeldin A production optimized medium.</text>
</comment>
<comment type="similarity">
    <text evidence="6">Belongs to the cytochrome P450 family.</text>
</comment>
<dbReference type="EC" id="1.-.-.-" evidence="7"/>
<dbReference type="EMBL" id="KJ728786">
    <property type="protein sequence ID" value="AIA58895.1"/>
    <property type="molecule type" value="Genomic_DNA"/>
</dbReference>
<dbReference type="SMR" id="A0A068A9T2"/>
<dbReference type="GlyCosmos" id="A0A068A9T2">
    <property type="glycosylation" value="2 sites, No reported glycans"/>
</dbReference>
<dbReference type="GO" id="GO:0016020">
    <property type="term" value="C:membrane"/>
    <property type="evidence" value="ECO:0007669"/>
    <property type="project" value="UniProtKB-SubCell"/>
</dbReference>
<dbReference type="GO" id="GO:0020037">
    <property type="term" value="F:heme binding"/>
    <property type="evidence" value="ECO:0007669"/>
    <property type="project" value="InterPro"/>
</dbReference>
<dbReference type="GO" id="GO:0005506">
    <property type="term" value="F:iron ion binding"/>
    <property type="evidence" value="ECO:0007669"/>
    <property type="project" value="InterPro"/>
</dbReference>
<dbReference type="GO" id="GO:0004497">
    <property type="term" value="F:monooxygenase activity"/>
    <property type="evidence" value="ECO:0007669"/>
    <property type="project" value="UniProtKB-KW"/>
</dbReference>
<dbReference type="GO" id="GO:0016705">
    <property type="term" value="F:oxidoreductase activity, acting on paired donors, with incorporation or reduction of molecular oxygen"/>
    <property type="evidence" value="ECO:0007669"/>
    <property type="project" value="InterPro"/>
</dbReference>
<dbReference type="GO" id="GO:0043386">
    <property type="term" value="P:mycotoxin biosynthetic process"/>
    <property type="evidence" value="ECO:0007669"/>
    <property type="project" value="UniProtKB-ARBA"/>
</dbReference>
<dbReference type="CDD" id="cd11062">
    <property type="entry name" value="CYP58-like"/>
    <property type="match status" value="1"/>
</dbReference>
<dbReference type="Gene3D" id="1.10.630.10">
    <property type="entry name" value="Cytochrome P450"/>
    <property type="match status" value="1"/>
</dbReference>
<dbReference type="InterPro" id="IPR001128">
    <property type="entry name" value="Cyt_P450"/>
</dbReference>
<dbReference type="InterPro" id="IPR017972">
    <property type="entry name" value="Cyt_P450_CS"/>
</dbReference>
<dbReference type="InterPro" id="IPR002401">
    <property type="entry name" value="Cyt_P450_E_grp-I"/>
</dbReference>
<dbReference type="InterPro" id="IPR036396">
    <property type="entry name" value="Cyt_P450_sf"/>
</dbReference>
<dbReference type="InterPro" id="IPR050121">
    <property type="entry name" value="Cytochrome_P450_monoxygenase"/>
</dbReference>
<dbReference type="PANTHER" id="PTHR24305">
    <property type="entry name" value="CYTOCHROME P450"/>
    <property type="match status" value="1"/>
</dbReference>
<dbReference type="PANTHER" id="PTHR24305:SF231">
    <property type="entry name" value="P450, PUTATIVE (EUROFUNG)-RELATED"/>
    <property type="match status" value="1"/>
</dbReference>
<dbReference type="Pfam" id="PF00067">
    <property type="entry name" value="p450"/>
    <property type="match status" value="1"/>
</dbReference>
<dbReference type="PRINTS" id="PR00463">
    <property type="entry name" value="EP450I"/>
</dbReference>
<dbReference type="PRINTS" id="PR00385">
    <property type="entry name" value="P450"/>
</dbReference>
<dbReference type="SUPFAM" id="SSF48264">
    <property type="entry name" value="Cytochrome P450"/>
    <property type="match status" value="1"/>
</dbReference>
<dbReference type="PROSITE" id="PS00086">
    <property type="entry name" value="CYTOCHROME_P450"/>
    <property type="match status" value="1"/>
</dbReference>
<accession>A0A068A9T2</accession>
<protein>
    <recommendedName>
        <fullName evidence="5">Cytochrome P450 monooxygenase orf3</fullName>
        <ecNumber evidence="7">1.-.-.-</ecNumber>
    </recommendedName>
    <alternativeName>
        <fullName evidence="5">Brefeldin A biosynthesis cluster protein orf3</fullName>
    </alternativeName>
</protein>
<name>BREF3_EUPBR</name>
<sequence>MFDIYDYSPRLVALGLIAATIIIYSFTLTVYRLFFHPLARIPGPKLCAITGWYEIFWDVLVGGQFTFKIEEWHKTYGPVMRIGPNEVHFNDPDFYNELYPTIGATYEKPAQWRWRFGCGTAIFDTIGHEHHAQRKAPVAAFFSRQKILQFSGFIQDQTDILVKRIRDDHRGQVICANEAFDALTMDIIGYYAFGLSYNSLQYPGFKAPYRNVTADIARMVHVGAHFPWVFTILNALPEKYITRLLPPMSKIFMFRKEISSQIRRIKDNKEYLDKNVNEHRTVFHEILNSNQPACELNEGRIYHEALSLVGAALETSKRTTALAVYYILATPGVEDNLRAELTAAMPDKTKNLSVPELEALPYLNAVIKEALRLAIGVSQRMRRYSPTETITYKDYTIPPNTVFGMCHWEQLRDARIWDRPTEFLPERWLAEQPLALNGQPLNKYFVPFHRGPRMCLGKEFGMAQLNIGLATLFRQDDIKLELYETDRKDVDVVADFFVPLTVKESQGVRVLVK</sequence>
<organism>
    <name type="scientific">Eupenicillium brefeldianum</name>
    <name type="common">Penicillium brefeldianum</name>
    <dbReference type="NCBI Taxonomy" id="1131482"/>
    <lineage>
        <taxon>Eukaryota</taxon>
        <taxon>Fungi</taxon>
        <taxon>Dikarya</taxon>
        <taxon>Ascomycota</taxon>
        <taxon>Pezizomycotina</taxon>
        <taxon>Eurotiomycetes</taxon>
        <taxon>Eurotiomycetidae</taxon>
        <taxon>Eurotiales</taxon>
        <taxon>Aspergillaceae</taxon>
        <taxon>Penicillium</taxon>
    </lineage>
</organism>
<proteinExistence type="evidence at transcript level"/>
<gene>
    <name evidence="5" type="primary">orf3</name>
</gene>
<feature type="chain" id="PRO_0000444931" description="Cytochrome P450 monooxygenase orf3">
    <location>
        <begin position="1"/>
        <end position="513"/>
    </location>
</feature>
<feature type="transmembrane region" description="Helical" evidence="2">
    <location>
        <begin position="11"/>
        <end position="31"/>
    </location>
</feature>
<feature type="binding site" description="axial binding residue" evidence="1">
    <location>
        <position position="455"/>
    </location>
    <ligand>
        <name>heme</name>
        <dbReference type="ChEBI" id="CHEBI:30413"/>
    </ligand>
    <ligandPart>
        <name>Fe</name>
        <dbReference type="ChEBI" id="CHEBI:18248"/>
    </ligandPart>
</feature>
<feature type="glycosylation site" description="N-linked (GlcNAc...) asparagine" evidence="3">
    <location>
        <position position="211"/>
    </location>
</feature>
<feature type="glycosylation site" description="N-linked (GlcNAc...) asparagine" evidence="3">
    <location>
        <position position="351"/>
    </location>
</feature>
<keyword id="KW-0325">Glycoprotein</keyword>
<keyword id="KW-0349">Heme</keyword>
<keyword id="KW-0408">Iron</keyword>
<keyword id="KW-0472">Membrane</keyword>
<keyword id="KW-0479">Metal-binding</keyword>
<keyword id="KW-0503">Monooxygenase</keyword>
<keyword id="KW-0560">Oxidoreductase</keyword>
<keyword id="KW-0812">Transmembrane</keyword>
<keyword id="KW-1133">Transmembrane helix</keyword>
<reference key="1">
    <citation type="journal article" date="2014" name="ACS Chem. Biol.">
        <title>Fungal polyketide synthase product chain-length control by partnering thiohydrolase.</title>
        <authorList>
            <person name="Zabala A.O."/>
            <person name="Chooi Y.H."/>
            <person name="Choi M.S."/>
            <person name="Lin H.C."/>
            <person name="Tang Y."/>
        </authorList>
    </citation>
    <scope>NUCLEOTIDE SEQUENCE [GENOMIC DNA]</scope>
    <scope>FUNCTION</scope>
    <scope>INDUCTION</scope>
    <source>
        <strain>ATCC 58665</strain>
    </source>
</reference>
<evidence type="ECO:0000250" key="1">
    <source>
        <dbReference type="UniProtKB" id="P04798"/>
    </source>
</evidence>
<evidence type="ECO:0000255" key="2"/>
<evidence type="ECO:0000255" key="3">
    <source>
        <dbReference type="PROSITE-ProRule" id="PRU00498"/>
    </source>
</evidence>
<evidence type="ECO:0000269" key="4">
    <source>
    </source>
</evidence>
<evidence type="ECO:0000303" key="5">
    <source>
    </source>
</evidence>
<evidence type="ECO:0000305" key="6"/>
<evidence type="ECO:0000305" key="7">
    <source>
    </source>
</evidence>